<sequence>MTAIIKEFVSRNKRRYQEDGFDLDLTYIYPNIIAMGFPAERLEGVYRNNIDDVVRFLDSKHKNHYKIYNLCAERHYDTNKFSCRVAQYPFEDHNPPQLELIKPFCEDLDQLLSENENVAAIHCKAGKGRTGVMICAYLLHRGKFPRAQEALDFYGEVRTRDKKGVTIPSQRRYVYYYSYLLKNSLEYRPVPLLFHKIEFETIPMFSGSTCNPQFVVYQLKVKIFTSTAGPKRAEKLMYFDFPQPLPVCGDIKVEFFHKQNKVMKKEKMFHFWVNTFFIPGPEEYSEKVENGTLVGEQELDGIYSTERSDNDKEYLTLALTKNDLDKANKDKANRLFSPNFKVKLFFTKTVEESSNSEASSSTSVTPDVSDNEPDHYRYSDTTDSDPENEPFDEDQITQITKV</sequence>
<proteinExistence type="evidence at transcript level"/>
<name>PTEN_XENLA</name>
<accession>Q9PUT6</accession>
<keyword id="KW-0053">Apoptosis</keyword>
<keyword id="KW-0966">Cell projection</keyword>
<keyword id="KW-0963">Cytoplasm</keyword>
<keyword id="KW-0378">Hydrolase</keyword>
<keyword id="KW-0443">Lipid metabolism</keyword>
<keyword id="KW-0446">Lipid-binding</keyword>
<keyword id="KW-0524">Neurogenesis</keyword>
<keyword id="KW-0539">Nucleus</keyword>
<keyword id="KW-0904">Protein phosphatase</keyword>
<keyword id="KW-1185">Reference proteome</keyword>
<keyword id="KW-0770">Synapse</keyword>
<keyword id="KW-0043">Tumor suppressor</keyword>
<keyword id="KW-0832">Ubl conjugation</keyword>
<gene>
    <name evidence="9" type="primary">pten</name>
</gene>
<evidence type="ECO:0000250" key="1"/>
<evidence type="ECO:0000250" key="2">
    <source>
        <dbReference type="UniProtKB" id="O08586"/>
    </source>
</evidence>
<evidence type="ECO:0000250" key="3">
    <source>
        <dbReference type="UniProtKB" id="O54857"/>
    </source>
</evidence>
<evidence type="ECO:0000250" key="4">
    <source>
        <dbReference type="UniProtKB" id="P60484"/>
    </source>
</evidence>
<evidence type="ECO:0000255" key="5">
    <source>
        <dbReference type="PROSITE-ProRule" id="PRU00589"/>
    </source>
</evidence>
<evidence type="ECO:0000255" key="6">
    <source>
        <dbReference type="PROSITE-ProRule" id="PRU00590"/>
    </source>
</evidence>
<evidence type="ECO:0000256" key="7">
    <source>
        <dbReference type="SAM" id="MobiDB-lite"/>
    </source>
</evidence>
<evidence type="ECO:0000305" key="8"/>
<evidence type="ECO:0000312" key="9">
    <source>
        <dbReference type="EMBL" id="AAD46165.1"/>
    </source>
</evidence>
<protein>
    <recommendedName>
        <fullName evidence="4">Phosphatidylinositol 3,4,5-trisphosphate 3-phosphatase and dual-specificity protein phosphatase PTEN</fullName>
        <ecNumber evidence="4">3.1.3.16</ecNumber>
        <ecNumber evidence="4">3.1.3.48</ecNumber>
        <ecNumber evidence="4">3.1.3.67</ecNumber>
    </recommendedName>
    <alternativeName>
        <fullName evidence="4">Inositol polyphosphate 3-phosphatase</fullName>
        <ecNumber evidence="4">3.1.3.-</ecNumber>
    </alternativeName>
    <alternativeName>
        <fullName>Mutated in multiple advanced cancers 1</fullName>
    </alternativeName>
    <alternativeName>
        <fullName>Phosphatase and tensin homolog</fullName>
    </alternativeName>
</protein>
<feature type="chain" id="PRO_0000227539" description="Phosphatidylinositol 3,4,5-trisphosphate 3-phosphatase and dual-specificity protein phosphatase PTEN">
    <location>
        <begin position="1"/>
        <end position="402"/>
    </location>
</feature>
<feature type="domain" description="Phosphatase tensin-type" evidence="6">
    <location>
        <begin position="14"/>
        <end position="184"/>
    </location>
</feature>
<feature type="domain" description="C2 tensin-type" evidence="5">
    <location>
        <begin position="189"/>
        <end position="349"/>
    </location>
</feature>
<feature type="region of interest" description="Disordered" evidence="7">
    <location>
        <begin position="354"/>
        <end position="402"/>
    </location>
</feature>
<feature type="short sequence motif" description="PDZ-binding">
    <location>
        <begin position="400"/>
        <end position="402"/>
    </location>
</feature>
<feature type="compositionally biased region" description="Low complexity" evidence="7">
    <location>
        <begin position="354"/>
        <end position="368"/>
    </location>
</feature>
<feature type="compositionally biased region" description="Acidic residues" evidence="7">
    <location>
        <begin position="382"/>
        <end position="395"/>
    </location>
</feature>
<feature type="active site" description="Phosphocysteine intermediate" evidence="6">
    <location>
        <position position="123"/>
    </location>
</feature>
<comment type="function">
    <text evidence="4">Dual-specificity protein phosphatase, dephosphorylating tyrosine-, serine- and threonine-phosphorylated proteins. Also functions as a lipid phosphatase, removing the phosphate in the D3 position of the inositol ring of PtdIns(3,4,5)P3/phosphatidylinositol 3,4,5-trisphosphate, PtdIns(3,4)P2/phosphatidylinositol 3,4-diphosphate and PtdIns3P/phosphatidylinositol 3-phosphate with a preference for PtdIns(3,4,5)P3. Furthermore, this enzyme can also act as a cytosolic inositol 3-phosphatase acting on Ins(1,3,4,5,6)P5/inositol 1,3,4,5,6 pentakisphosphate and possibly Ins(1,3,4,5)P4/1D-myo-inositol 1,3,4,5-tetrakisphosphate.</text>
</comment>
<comment type="catalytic activity">
    <reaction evidence="4">
        <text>a 1,2-diacyl-sn-glycero-3-phospho-(1D-myo-inositol-3,4,5-trisphosphate) + H2O = a 1,2-diacyl-sn-glycero-3-phospho-(1D-myo-inositol-4,5-bisphosphate) + phosphate</text>
        <dbReference type="Rhea" id="RHEA:25017"/>
        <dbReference type="ChEBI" id="CHEBI:15377"/>
        <dbReference type="ChEBI" id="CHEBI:43474"/>
        <dbReference type="ChEBI" id="CHEBI:57836"/>
        <dbReference type="ChEBI" id="CHEBI:58456"/>
        <dbReference type="EC" id="3.1.3.67"/>
    </reaction>
    <physiologicalReaction direction="left-to-right" evidence="4">
        <dbReference type="Rhea" id="RHEA:25018"/>
    </physiologicalReaction>
</comment>
<comment type="catalytic activity">
    <reaction evidence="4">
        <text>O-phospho-L-seryl-[protein] + H2O = L-seryl-[protein] + phosphate</text>
        <dbReference type="Rhea" id="RHEA:20629"/>
        <dbReference type="Rhea" id="RHEA-COMP:9863"/>
        <dbReference type="Rhea" id="RHEA-COMP:11604"/>
        <dbReference type="ChEBI" id="CHEBI:15377"/>
        <dbReference type="ChEBI" id="CHEBI:29999"/>
        <dbReference type="ChEBI" id="CHEBI:43474"/>
        <dbReference type="ChEBI" id="CHEBI:83421"/>
        <dbReference type="EC" id="3.1.3.16"/>
    </reaction>
    <physiologicalReaction direction="left-to-right" evidence="4">
        <dbReference type="Rhea" id="RHEA:20630"/>
    </physiologicalReaction>
</comment>
<comment type="catalytic activity">
    <reaction evidence="4">
        <text>O-phospho-L-threonyl-[protein] + H2O = L-threonyl-[protein] + phosphate</text>
        <dbReference type="Rhea" id="RHEA:47004"/>
        <dbReference type="Rhea" id="RHEA-COMP:11060"/>
        <dbReference type="Rhea" id="RHEA-COMP:11605"/>
        <dbReference type="ChEBI" id="CHEBI:15377"/>
        <dbReference type="ChEBI" id="CHEBI:30013"/>
        <dbReference type="ChEBI" id="CHEBI:43474"/>
        <dbReference type="ChEBI" id="CHEBI:61977"/>
        <dbReference type="EC" id="3.1.3.16"/>
    </reaction>
    <physiologicalReaction direction="left-to-right" evidence="4">
        <dbReference type="Rhea" id="RHEA:47005"/>
    </physiologicalReaction>
</comment>
<comment type="catalytic activity">
    <reaction evidence="4">
        <text>O-phospho-L-tyrosyl-[protein] + H2O = L-tyrosyl-[protein] + phosphate</text>
        <dbReference type="Rhea" id="RHEA:10684"/>
        <dbReference type="Rhea" id="RHEA-COMP:10136"/>
        <dbReference type="Rhea" id="RHEA-COMP:20101"/>
        <dbReference type="ChEBI" id="CHEBI:15377"/>
        <dbReference type="ChEBI" id="CHEBI:43474"/>
        <dbReference type="ChEBI" id="CHEBI:46858"/>
        <dbReference type="ChEBI" id="CHEBI:61978"/>
        <dbReference type="EC" id="3.1.3.48"/>
    </reaction>
    <physiologicalReaction direction="left-to-right" evidence="4">
        <dbReference type="Rhea" id="RHEA:10685"/>
    </physiologicalReaction>
</comment>
<comment type="catalytic activity">
    <reaction evidence="4">
        <text>1,2-dioctanoyl-sn-glycero-3-phospho-(1D-myo-inositol-3,4,5-trisphosphate) + H2O = 1,2-dioctanoyl-sn-glycero-3-phospho-(1D-myo-inositol-4,5-bisphosphate) + phosphate</text>
        <dbReference type="Rhea" id="RHEA:43552"/>
        <dbReference type="ChEBI" id="CHEBI:15377"/>
        <dbReference type="ChEBI" id="CHEBI:43474"/>
        <dbReference type="ChEBI" id="CHEBI:83416"/>
        <dbReference type="ChEBI" id="CHEBI:83419"/>
    </reaction>
    <physiologicalReaction direction="left-to-right" evidence="4">
        <dbReference type="Rhea" id="RHEA:43553"/>
    </physiologicalReaction>
</comment>
<comment type="catalytic activity">
    <reaction evidence="4">
        <text>1,2-dihexadecanoyl-sn-glycero-3-phospho-(1D-myo-inositol-3,4,5-trisphosphate) + H2O = 1,2-dihexadecanoyl-sn-glycero-3-phospho-(1D-myo-inositol-4,5-bisphosphate) + phosphate</text>
        <dbReference type="Rhea" id="RHEA:43560"/>
        <dbReference type="ChEBI" id="CHEBI:15377"/>
        <dbReference type="ChEBI" id="CHEBI:43474"/>
        <dbReference type="ChEBI" id="CHEBI:83420"/>
        <dbReference type="ChEBI" id="CHEBI:83423"/>
    </reaction>
    <physiologicalReaction direction="left-to-right" evidence="4">
        <dbReference type="Rhea" id="RHEA:43561"/>
    </physiologicalReaction>
</comment>
<comment type="catalytic activity">
    <reaction evidence="4">
        <text>1D-myo-inositol 1,3,4,5,6-pentakisphosphate + H2O = 1D-myo-inositol 1,4,5,6-tetrakisphosphate + phosphate</text>
        <dbReference type="Rhea" id="RHEA:77143"/>
        <dbReference type="ChEBI" id="CHEBI:15377"/>
        <dbReference type="ChEBI" id="CHEBI:43474"/>
        <dbReference type="ChEBI" id="CHEBI:57627"/>
        <dbReference type="ChEBI" id="CHEBI:57733"/>
    </reaction>
    <physiologicalReaction direction="left-to-right" evidence="4">
        <dbReference type="Rhea" id="RHEA:77144"/>
    </physiologicalReaction>
</comment>
<comment type="catalytic activity">
    <reaction evidence="4">
        <text>1D-myo-inositol 1,3,4,5-tetrakisphosphate + H2O = 1D-myo-inositol 1,4,5-trisphosphate + phosphate</text>
        <dbReference type="Rhea" id="RHEA:77155"/>
        <dbReference type="ChEBI" id="CHEBI:15377"/>
        <dbReference type="ChEBI" id="CHEBI:43474"/>
        <dbReference type="ChEBI" id="CHEBI:57895"/>
        <dbReference type="ChEBI" id="CHEBI:203600"/>
    </reaction>
    <physiologicalReaction direction="left-to-right" evidence="4">
        <dbReference type="Rhea" id="RHEA:77156"/>
    </physiologicalReaction>
</comment>
<comment type="cofactor">
    <cofactor evidence="2">
        <name>Mg(2+)</name>
        <dbReference type="ChEBI" id="CHEBI:18420"/>
    </cofactor>
</comment>
<comment type="subunit">
    <text evidence="4">Monomer.</text>
</comment>
<comment type="subcellular location">
    <subcellularLocation>
        <location evidence="2">Cytoplasm</location>
    </subcellularLocation>
    <subcellularLocation>
        <location evidence="2">Nucleus</location>
    </subcellularLocation>
    <subcellularLocation>
        <location evidence="4">Nucleus</location>
        <location evidence="4">PML body</location>
    </subcellularLocation>
    <subcellularLocation>
        <location evidence="2">Cell projection</location>
        <location evidence="2">Dendritic spine</location>
    </subcellularLocation>
    <subcellularLocation>
        <location evidence="3">Postsynaptic density</location>
    </subcellularLocation>
</comment>
<comment type="PTM">
    <text evidence="1">Monoubiquitinated. Deubiquitinated (By similarity).</text>
</comment>
<comment type="similarity">
    <text evidence="8">Belongs to the PTEN phosphatase protein family.</text>
</comment>
<reference evidence="9" key="1">
    <citation type="journal article" date="1999" name="Cell">
        <title>Crystal structure of the PTEN tumor suppressor: implications for its phosphoinositide phosphatase activity and membrane association.</title>
        <authorList>
            <person name="Lee J.-O."/>
            <person name="Yang H."/>
            <person name="Georgescu M.-M."/>
            <person name="Di Cristofano A."/>
            <person name="Maehama T."/>
            <person name="Shi Y."/>
            <person name="Dixon J.E."/>
            <person name="Pandolfi P."/>
            <person name="Pavletich N.P."/>
        </authorList>
    </citation>
    <scope>NUCLEOTIDE SEQUENCE [MRNA]</scope>
    <source>
        <tissue evidence="9">Testis</tissue>
    </source>
</reference>
<organism>
    <name type="scientific">Xenopus laevis</name>
    <name type="common">African clawed frog</name>
    <dbReference type="NCBI Taxonomy" id="8355"/>
    <lineage>
        <taxon>Eukaryota</taxon>
        <taxon>Metazoa</taxon>
        <taxon>Chordata</taxon>
        <taxon>Craniata</taxon>
        <taxon>Vertebrata</taxon>
        <taxon>Euteleostomi</taxon>
        <taxon>Amphibia</taxon>
        <taxon>Batrachia</taxon>
        <taxon>Anura</taxon>
        <taxon>Pipoidea</taxon>
        <taxon>Pipidae</taxon>
        <taxon>Xenopodinae</taxon>
        <taxon>Xenopus</taxon>
        <taxon>Xenopus</taxon>
    </lineage>
</organism>
<dbReference type="EC" id="3.1.3.16" evidence="4"/>
<dbReference type="EC" id="3.1.3.48" evidence="4"/>
<dbReference type="EC" id="3.1.3.67" evidence="4"/>
<dbReference type="EC" id="3.1.3.-" evidence="4"/>
<dbReference type="EMBL" id="AF144732">
    <property type="protein sequence ID" value="AAD46165.1"/>
    <property type="molecule type" value="mRNA"/>
</dbReference>
<dbReference type="SMR" id="Q9PUT6"/>
<dbReference type="KEGG" id="xla:399142"/>
<dbReference type="AGR" id="Xenbase:XB-GENE-491437"/>
<dbReference type="CTD" id="399142"/>
<dbReference type="Xenbase" id="XB-GENE-491437">
    <property type="gene designation" value="pten.L"/>
</dbReference>
<dbReference type="OrthoDB" id="16692at2759"/>
<dbReference type="Proteomes" id="UP000186698">
    <property type="component" value="Chromosome 7L"/>
</dbReference>
<dbReference type="Bgee" id="399142">
    <property type="expression patterns" value="Expressed in spleen and 19 other cell types or tissues"/>
</dbReference>
<dbReference type="GO" id="GO:0042995">
    <property type="term" value="C:cell projection"/>
    <property type="evidence" value="ECO:0000318"/>
    <property type="project" value="GO_Central"/>
</dbReference>
<dbReference type="GO" id="GO:0005737">
    <property type="term" value="C:cytoplasm"/>
    <property type="evidence" value="ECO:0000250"/>
    <property type="project" value="UniProtKB"/>
</dbReference>
<dbReference type="GO" id="GO:0005829">
    <property type="term" value="C:cytosol"/>
    <property type="evidence" value="ECO:0000318"/>
    <property type="project" value="GO_Central"/>
</dbReference>
<dbReference type="GO" id="GO:0043197">
    <property type="term" value="C:dendritic spine"/>
    <property type="evidence" value="ECO:0007669"/>
    <property type="project" value="UniProtKB-SubCell"/>
</dbReference>
<dbReference type="GO" id="GO:0005634">
    <property type="term" value="C:nucleus"/>
    <property type="evidence" value="ECO:0000318"/>
    <property type="project" value="GO_Central"/>
</dbReference>
<dbReference type="GO" id="GO:0005886">
    <property type="term" value="C:plasma membrane"/>
    <property type="evidence" value="ECO:0000318"/>
    <property type="project" value="GO_Central"/>
</dbReference>
<dbReference type="GO" id="GO:0016605">
    <property type="term" value="C:PML body"/>
    <property type="evidence" value="ECO:0007669"/>
    <property type="project" value="UniProtKB-SubCell"/>
</dbReference>
<dbReference type="GO" id="GO:0014069">
    <property type="term" value="C:postsynaptic density"/>
    <property type="evidence" value="ECO:0007669"/>
    <property type="project" value="UniProtKB-SubCell"/>
</dbReference>
<dbReference type="GO" id="GO:0030351">
    <property type="term" value="F:inositol-1,3,4,5,6-pentakisphosphate 3-phosphatase activity"/>
    <property type="evidence" value="ECO:0000250"/>
    <property type="project" value="UniProtKB"/>
</dbReference>
<dbReference type="GO" id="GO:0051717">
    <property type="term" value="F:inositol-1,3,4,5-tetrakisphosphate 3-phosphatase activity"/>
    <property type="evidence" value="ECO:0000250"/>
    <property type="project" value="UniProtKB"/>
</dbReference>
<dbReference type="GO" id="GO:0008289">
    <property type="term" value="F:lipid binding"/>
    <property type="evidence" value="ECO:0007669"/>
    <property type="project" value="UniProtKB-KW"/>
</dbReference>
<dbReference type="GO" id="GO:0030165">
    <property type="term" value="F:PDZ domain binding"/>
    <property type="evidence" value="ECO:0000250"/>
    <property type="project" value="UniProtKB"/>
</dbReference>
<dbReference type="GO" id="GO:0016314">
    <property type="term" value="F:phosphatidylinositol-3,4,5-trisphosphate 3-phosphatase activity"/>
    <property type="evidence" value="ECO:0000250"/>
    <property type="project" value="UniProtKB"/>
</dbReference>
<dbReference type="GO" id="GO:0051800">
    <property type="term" value="F:phosphatidylinositol-3,4-bisphosphate 3-phosphatase activity"/>
    <property type="evidence" value="ECO:0000250"/>
    <property type="project" value="UniProtKB"/>
</dbReference>
<dbReference type="GO" id="GO:0004438">
    <property type="term" value="F:phosphatidylinositol-3-phosphate phosphatase activity"/>
    <property type="evidence" value="ECO:0000250"/>
    <property type="project" value="UniProtKB"/>
</dbReference>
<dbReference type="GO" id="GO:0004722">
    <property type="term" value="F:protein serine/threonine phosphatase activity"/>
    <property type="evidence" value="ECO:0000250"/>
    <property type="project" value="UniProtKB"/>
</dbReference>
<dbReference type="GO" id="GO:0004725">
    <property type="term" value="F:protein tyrosine phosphatase activity"/>
    <property type="evidence" value="ECO:0000250"/>
    <property type="project" value="UniProtKB"/>
</dbReference>
<dbReference type="GO" id="GO:0006915">
    <property type="term" value="P:apoptotic process"/>
    <property type="evidence" value="ECO:0007669"/>
    <property type="project" value="UniProtKB-KW"/>
</dbReference>
<dbReference type="GO" id="GO:0048870">
    <property type="term" value="P:cell motility"/>
    <property type="evidence" value="ECO:0000318"/>
    <property type="project" value="GO_Central"/>
</dbReference>
<dbReference type="GO" id="GO:0030336">
    <property type="term" value="P:negative regulation of cell migration"/>
    <property type="evidence" value="ECO:0000250"/>
    <property type="project" value="UniProtKB"/>
</dbReference>
<dbReference type="GO" id="GO:0008285">
    <property type="term" value="P:negative regulation of cell population proliferation"/>
    <property type="evidence" value="ECO:0000250"/>
    <property type="project" value="UniProtKB"/>
</dbReference>
<dbReference type="GO" id="GO:0051895">
    <property type="term" value="P:negative regulation of focal adhesion assembly"/>
    <property type="evidence" value="ECO:0000250"/>
    <property type="project" value="UniProtKB"/>
</dbReference>
<dbReference type="GO" id="GO:0051898">
    <property type="term" value="P:negative regulation of phosphatidylinositol 3-kinase/protein kinase B signal transduction"/>
    <property type="evidence" value="ECO:0000250"/>
    <property type="project" value="UniProtKB"/>
</dbReference>
<dbReference type="GO" id="GO:0007399">
    <property type="term" value="P:nervous system development"/>
    <property type="evidence" value="ECO:0007669"/>
    <property type="project" value="UniProtKB-KW"/>
</dbReference>
<dbReference type="GO" id="GO:0043491">
    <property type="term" value="P:phosphatidylinositol 3-kinase/protein kinase B signal transduction"/>
    <property type="evidence" value="ECO:0000318"/>
    <property type="project" value="GO_Central"/>
</dbReference>
<dbReference type="GO" id="GO:0046856">
    <property type="term" value="P:phosphatidylinositol dephosphorylation"/>
    <property type="evidence" value="ECO:0000318"/>
    <property type="project" value="GO_Central"/>
</dbReference>
<dbReference type="GO" id="GO:0006470">
    <property type="term" value="P:protein dephosphorylation"/>
    <property type="evidence" value="ECO:0000250"/>
    <property type="project" value="UniProtKB"/>
</dbReference>
<dbReference type="GO" id="GO:0050793">
    <property type="term" value="P:regulation of developmental process"/>
    <property type="evidence" value="ECO:0007669"/>
    <property type="project" value="UniProtKB-ARBA"/>
</dbReference>
<dbReference type="GO" id="GO:0010975">
    <property type="term" value="P:regulation of neuron projection development"/>
    <property type="evidence" value="ECO:0000250"/>
    <property type="project" value="UniProtKB"/>
</dbReference>
<dbReference type="GO" id="GO:0051896">
    <property type="term" value="P:regulation of phosphatidylinositol 3-kinase/protein kinase B signal transduction"/>
    <property type="evidence" value="ECO:0000318"/>
    <property type="project" value="GO_Central"/>
</dbReference>
<dbReference type="GO" id="GO:0031647">
    <property type="term" value="P:regulation of protein stability"/>
    <property type="evidence" value="ECO:0000250"/>
    <property type="project" value="UniProtKB"/>
</dbReference>
<dbReference type="CDD" id="cd14509">
    <property type="entry name" value="PTP_PTEN"/>
    <property type="match status" value="1"/>
</dbReference>
<dbReference type="FunFam" id="2.60.40.1110:FF:000003">
    <property type="entry name" value="Phosphatidylinositol 3,4,5-trisphosphate 3-phosphatase and dual-specificity protein phosphatase PTEN"/>
    <property type="match status" value="1"/>
</dbReference>
<dbReference type="FunFam" id="3.90.190.10:FF:000029">
    <property type="entry name" value="Phosphatidylinositol 3,4,5-trisphosphate 3-phosphatase and dual-specificity protein phosphatase PTEN"/>
    <property type="match status" value="1"/>
</dbReference>
<dbReference type="Gene3D" id="2.60.40.1110">
    <property type="match status" value="1"/>
</dbReference>
<dbReference type="Gene3D" id="3.90.190.10">
    <property type="entry name" value="Protein tyrosine phosphatase superfamily"/>
    <property type="match status" value="1"/>
</dbReference>
<dbReference type="InterPro" id="IPR017361">
    <property type="entry name" value="Bifunc_PIno_P3_Pase/Pase_PTEN"/>
</dbReference>
<dbReference type="InterPro" id="IPR035892">
    <property type="entry name" value="C2_domain_sf"/>
</dbReference>
<dbReference type="InterPro" id="IPR051281">
    <property type="entry name" value="Dual-spec_lipid-protein_phosph"/>
</dbReference>
<dbReference type="InterPro" id="IPR029021">
    <property type="entry name" value="Prot-tyrosine_phosphatase-like"/>
</dbReference>
<dbReference type="InterPro" id="IPR045101">
    <property type="entry name" value="PTP_PTEN"/>
</dbReference>
<dbReference type="InterPro" id="IPR014020">
    <property type="entry name" value="Tensin_C2-dom"/>
</dbReference>
<dbReference type="InterPro" id="IPR029023">
    <property type="entry name" value="Tensin_phosphatase"/>
</dbReference>
<dbReference type="InterPro" id="IPR016130">
    <property type="entry name" value="Tyr_Pase_AS"/>
</dbReference>
<dbReference type="InterPro" id="IPR003595">
    <property type="entry name" value="Tyr_Pase_cat"/>
</dbReference>
<dbReference type="InterPro" id="IPR000387">
    <property type="entry name" value="Tyr_Pase_dom"/>
</dbReference>
<dbReference type="PANTHER" id="PTHR12305">
    <property type="entry name" value="PHOSPHATASE WITH HOMOLOGY TO TENSIN"/>
    <property type="match status" value="1"/>
</dbReference>
<dbReference type="PANTHER" id="PTHR12305:SF81">
    <property type="entry name" value="PHOSPHATIDYLINOSITOL 3,4,5-TRISPHOSPHATE 3-PHOSPHATASE AND DUAL-SPECIFICITY PROTEIN PHOSPHATASE PTEN"/>
    <property type="match status" value="1"/>
</dbReference>
<dbReference type="Pfam" id="PF10409">
    <property type="entry name" value="PTEN_C2"/>
    <property type="match status" value="1"/>
</dbReference>
<dbReference type="Pfam" id="PF22785">
    <property type="entry name" value="Tc-R-P"/>
    <property type="match status" value="1"/>
</dbReference>
<dbReference type="PIRSF" id="PIRSF038025">
    <property type="entry name" value="PTEN"/>
    <property type="match status" value="1"/>
</dbReference>
<dbReference type="SMART" id="SM01326">
    <property type="entry name" value="PTEN_C2"/>
    <property type="match status" value="1"/>
</dbReference>
<dbReference type="SMART" id="SM00404">
    <property type="entry name" value="PTPc_motif"/>
    <property type="match status" value="1"/>
</dbReference>
<dbReference type="SUPFAM" id="SSF52799">
    <property type="entry name" value="(Phosphotyrosine protein) phosphatases II"/>
    <property type="match status" value="1"/>
</dbReference>
<dbReference type="SUPFAM" id="SSF49562">
    <property type="entry name" value="C2 domain (Calcium/lipid-binding domain, CaLB)"/>
    <property type="match status" value="1"/>
</dbReference>
<dbReference type="PROSITE" id="PS51182">
    <property type="entry name" value="C2_TENSIN"/>
    <property type="match status" value="1"/>
</dbReference>
<dbReference type="PROSITE" id="PS51181">
    <property type="entry name" value="PPASE_TENSIN"/>
    <property type="match status" value="1"/>
</dbReference>
<dbReference type="PROSITE" id="PS50056">
    <property type="entry name" value="TYR_PHOSPHATASE_2"/>
    <property type="match status" value="1"/>
</dbReference>